<feature type="chain" id="PRO_0000146518" description="Small ribosomal subunit protein uS10">
    <location>
        <begin position="1"/>
        <end position="103"/>
    </location>
</feature>
<organism>
    <name type="scientific">Chlorobaculum tepidum (strain ATCC 49652 / DSM 12025 / NBRC 103806 / TLS)</name>
    <name type="common">Chlorobium tepidum</name>
    <dbReference type="NCBI Taxonomy" id="194439"/>
    <lineage>
        <taxon>Bacteria</taxon>
        <taxon>Pseudomonadati</taxon>
        <taxon>Chlorobiota</taxon>
        <taxon>Chlorobiia</taxon>
        <taxon>Chlorobiales</taxon>
        <taxon>Chlorobiaceae</taxon>
        <taxon>Chlorobaculum</taxon>
    </lineage>
</organism>
<accession>Q8KAH1</accession>
<comment type="function">
    <text evidence="1">Involved in the binding of tRNA to the ribosomes.</text>
</comment>
<comment type="subunit">
    <text evidence="1">Part of the 30S ribosomal subunit.</text>
</comment>
<comment type="similarity">
    <text evidence="1">Belongs to the universal ribosomal protein uS10 family.</text>
</comment>
<reference key="1">
    <citation type="journal article" date="2002" name="Proc. Natl. Acad. Sci. U.S.A.">
        <title>The complete genome sequence of Chlorobium tepidum TLS, a photosynthetic, anaerobic, green-sulfur bacterium.</title>
        <authorList>
            <person name="Eisen J.A."/>
            <person name="Nelson K.E."/>
            <person name="Paulsen I.T."/>
            <person name="Heidelberg J.F."/>
            <person name="Wu M."/>
            <person name="Dodson R.J."/>
            <person name="DeBoy R.T."/>
            <person name="Gwinn M.L."/>
            <person name="Nelson W.C."/>
            <person name="Haft D.H."/>
            <person name="Hickey E.K."/>
            <person name="Peterson J.D."/>
            <person name="Durkin A.S."/>
            <person name="Kolonay J.F."/>
            <person name="Yang F."/>
            <person name="Holt I.E."/>
            <person name="Umayam L.A."/>
            <person name="Mason T.M."/>
            <person name="Brenner M."/>
            <person name="Shea T.P."/>
            <person name="Parksey D.S."/>
            <person name="Nierman W.C."/>
            <person name="Feldblyum T.V."/>
            <person name="Hansen C.L."/>
            <person name="Craven M.B."/>
            <person name="Radune D."/>
            <person name="Vamathevan J.J."/>
            <person name="Khouri H.M."/>
            <person name="White O."/>
            <person name="Gruber T.M."/>
            <person name="Ketchum K.A."/>
            <person name="Venter J.C."/>
            <person name="Tettelin H."/>
            <person name="Bryant D.A."/>
            <person name="Fraser C.M."/>
        </authorList>
    </citation>
    <scope>NUCLEOTIDE SEQUENCE [LARGE SCALE GENOMIC DNA]</scope>
    <source>
        <strain>ATCC 49652 / DSM 12025 / NBRC 103806 / TLS</strain>
    </source>
</reference>
<gene>
    <name evidence="1" type="primary">rpsJ</name>
    <name type="ordered locus">CT2190</name>
</gene>
<protein>
    <recommendedName>
        <fullName evidence="1">Small ribosomal subunit protein uS10</fullName>
    </recommendedName>
    <alternativeName>
        <fullName evidence="2">30S ribosomal protein S10</fullName>
    </alternativeName>
</protein>
<evidence type="ECO:0000255" key="1">
    <source>
        <dbReference type="HAMAP-Rule" id="MF_00508"/>
    </source>
</evidence>
<evidence type="ECO:0000305" key="2"/>
<keyword id="KW-1185">Reference proteome</keyword>
<keyword id="KW-0687">Ribonucleoprotein</keyword>
<keyword id="KW-0689">Ribosomal protein</keyword>
<dbReference type="EMBL" id="AE006470">
    <property type="protein sequence ID" value="AAM73406.1"/>
    <property type="molecule type" value="Genomic_DNA"/>
</dbReference>
<dbReference type="RefSeq" id="NP_663064.1">
    <property type="nucleotide sequence ID" value="NC_002932.3"/>
</dbReference>
<dbReference type="RefSeq" id="WP_010933843.1">
    <property type="nucleotide sequence ID" value="NC_002932.3"/>
</dbReference>
<dbReference type="SMR" id="Q8KAH1"/>
<dbReference type="STRING" id="194439.CT2190"/>
<dbReference type="EnsemblBacteria" id="AAM73406">
    <property type="protein sequence ID" value="AAM73406"/>
    <property type="gene ID" value="CT2190"/>
</dbReference>
<dbReference type="KEGG" id="cte:CT2190"/>
<dbReference type="PATRIC" id="fig|194439.7.peg.1989"/>
<dbReference type="eggNOG" id="COG0051">
    <property type="taxonomic scope" value="Bacteria"/>
</dbReference>
<dbReference type="HOGENOM" id="CLU_122625_1_3_10"/>
<dbReference type="OrthoDB" id="9804464at2"/>
<dbReference type="Proteomes" id="UP000001007">
    <property type="component" value="Chromosome"/>
</dbReference>
<dbReference type="GO" id="GO:1990904">
    <property type="term" value="C:ribonucleoprotein complex"/>
    <property type="evidence" value="ECO:0007669"/>
    <property type="project" value="UniProtKB-KW"/>
</dbReference>
<dbReference type="GO" id="GO:0005840">
    <property type="term" value="C:ribosome"/>
    <property type="evidence" value="ECO:0007669"/>
    <property type="project" value="UniProtKB-KW"/>
</dbReference>
<dbReference type="GO" id="GO:0003735">
    <property type="term" value="F:structural constituent of ribosome"/>
    <property type="evidence" value="ECO:0007669"/>
    <property type="project" value="InterPro"/>
</dbReference>
<dbReference type="GO" id="GO:0000049">
    <property type="term" value="F:tRNA binding"/>
    <property type="evidence" value="ECO:0007669"/>
    <property type="project" value="UniProtKB-UniRule"/>
</dbReference>
<dbReference type="GO" id="GO:0006412">
    <property type="term" value="P:translation"/>
    <property type="evidence" value="ECO:0007669"/>
    <property type="project" value="UniProtKB-UniRule"/>
</dbReference>
<dbReference type="FunFam" id="3.30.70.600:FF:000003">
    <property type="entry name" value="30S ribosomal protein S10"/>
    <property type="match status" value="1"/>
</dbReference>
<dbReference type="Gene3D" id="3.30.70.600">
    <property type="entry name" value="Ribosomal protein S10 domain"/>
    <property type="match status" value="1"/>
</dbReference>
<dbReference type="HAMAP" id="MF_00508">
    <property type="entry name" value="Ribosomal_uS10"/>
    <property type="match status" value="1"/>
</dbReference>
<dbReference type="InterPro" id="IPR001848">
    <property type="entry name" value="Ribosomal_uS10"/>
</dbReference>
<dbReference type="InterPro" id="IPR027486">
    <property type="entry name" value="Ribosomal_uS10_dom"/>
</dbReference>
<dbReference type="InterPro" id="IPR036838">
    <property type="entry name" value="Ribosomal_uS10_dom_sf"/>
</dbReference>
<dbReference type="NCBIfam" id="NF001861">
    <property type="entry name" value="PRK00596.1"/>
    <property type="match status" value="1"/>
</dbReference>
<dbReference type="NCBIfam" id="TIGR01049">
    <property type="entry name" value="rpsJ_bact"/>
    <property type="match status" value="1"/>
</dbReference>
<dbReference type="PANTHER" id="PTHR11700">
    <property type="entry name" value="30S RIBOSOMAL PROTEIN S10 FAMILY MEMBER"/>
    <property type="match status" value="1"/>
</dbReference>
<dbReference type="Pfam" id="PF00338">
    <property type="entry name" value="Ribosomal_S10"/>
    <property type="match status" value="1"/>
</dbReference>
<dbReference type="PRINTS" id="PR00971">
    <property type="entry name" value="RIBOSOMALS10"/>
</dbReference>
<dbReference type="SMART" id="SM01403">
    <property type="entry name" value="Ribosomal_S10"/>
    <property type="match status" value="1"/>
</dbReference>
<dbReference type="SUPFAM" id="SSF54999">
    <property type="entry name" value="Ribosomal protein S10"/>
    <property type="match status" value="1"/>
</dbReference>
<sequence>MAVQQKIRIKLKSYDHSLVDKWALKIIDVVKQTEAIIFGPIPLPTKTHVYTVNRSPHVDKKSREQFAFSSHKRLIEIINPTARTIDMLMKLELPSGVDVEIKS</sequence>
<name>RS10_CHLTE</name>
<proteinExistence type="inferred from homology"/>